<keyword id="KW-0963">Cytoplasm</keyword>
<keyword id="KW-0469">Meiosis</keyword>
<keyword id="KW-0539">Nucleus</keyword>
<keyword id="KW-1185">Reference proteome</keyword>
<keyword id="KW-0802">TPR repeat</keyword>
<accession>Q96WW2</accession>
<accession>O13609</accession>
<feature type="chain" id="PRO_0000106419" description="Meiotically up-regulated gene 93 protein">
    <location>
        <begin position="1"/>
        <end position="383"/>
    </location>
</feature>
<feature type="repeat" description="TPR" evidence="1">
    <location>
        <begin position="75"/>
        <end position="108"/>
    </location>
</feature>
<protein>
    <recommendedName>
        <fullName>Meiotically up-regulated gene 93 protein</fullName>
    </recommendedName>
</protein>
<organism>
    <name type="scientific">Schizosaccharomyces pombe (strain 972 / ATCC 24843)</name>
    <name type="common">Fission yeast</name>
    <dbReference type="NCBI Taxonomy" id="284812"/>
    <lineage>
        <taxon>Eukaryota</taxon>
        <taxon>Fungi</taxon>
        <taxon>Dikarya</taxon>
        <taxon>Ascomycota</taxon>
        <taxon>Taphrinomycotina</taxon>
        <taxon>Schizosaccharomycetes</taxon>
        <taxon>Schizosaccharomycetales</taxon>
        <taxon>Schizosaccharomycetaceae</taxon>
        <taxon>Schizosaccharomyces</taxon>
    </lineage>
</organism>
<sequence length="383" mass="44735">MEEKENVNLVEKSNYVALENTREIDVFDEFLNAIGNENTITPVYADSSLTHLRKKSYTKVVHDCTYALVINPYDKKVIWRRGLAYLRLGHPHLANRDWEHSLELDPNNTYIQKSLHRLKEVYYIYRECAETWQLRHLRVASSQQLPVGLRKQYPNIIRGKIWWKKVHDNCQLCGQQCELKKENLSAMRSMLYMANTYAKDDTENHSPSAQIGIESSEDELENKITKGEHSLLVPEELYRSNYPCPQNIDQFLYMIKVLSAPCLYIETFSFPISTINQLFKAHGMSVEQLNLFLKSIHYIGLCSRFCKQWSDKARSLMQALSGLPWFSFVVQHCLHITAAQILLHIPDIQEEEFRNWHVSKKPINNTDLSSEFEIAEIPINCYT</sequence>
<reference evidence="4 5" key="1">
    <citation type="journal article" date="2000" name="Yeast">
        <title>A 38 kb segment containing the cdc2 gene from the left arm of fission yeast chromosome II: sequence analysis and characterization of the genomic DNA and cDNAs encoded on the segment.</title>
        <authorList>
            <person name="Machida M."/>
            <person name="Yamazaki S."/>
            <person name="Kunihiro S."/>
            <person name="Tanaka T."/>
            <person name="Kushida N."/>
            <person name="Jinno K."/>
            <person name="Haikawa Y."/>
            <person name="Yamazaki J."/>
            <person name="Yamamoto S."/>
            <person name="Sekine M."/>
            <person name="Oguchi A."/>
            <person name="Nagai Y."/>
            <person name="Sakai M."/>
            <person name="Aoki K."/>
            <person name="Ogura K."/>
            <person name="Kudoh Y."/>
            <person name="Kikuchi H."/>
            <person name="Zhang M.Q."/>
            <person name="Yanagida M."/>
        </authorList>
    </citation>
    <scope>NUCLEOTIDE SEQUENCE [LARGE SCALE GENOMIC DNA]</scope>
    <source>
        <strain>972 / ATCC 24843</strain>
    </source>
</reference>
<reference key="2">
    <citation type="journal article" date="2002" name="Nature">
        <title>The genome sequence of Schizosaccharomyces pombe.</title>
        <authorList>
            <person name="Wood V."/>
            <person name="Gwilliam R."/>
            <person name="Rajandream M.A."/>
            <person name="Lyne M.H."/>
            <person name="Lyne R."/>
            <person name="Stewart A."/>
            <person name="Sgouros J.G."/>
            <person name="Peat N."/>
            <person name="Hayles J."/>
            <person name="Baker S.G."/>
            <person name="Basham D."/>
            <person name="Bowman S."/>
            <person name="Brooks K."/>
            <person name="Brown D."/>
            <person name="Brown S."/>
            <person name="Chillingworth T."/>
            <person name="Churcher C.M."/>
            <person name="Collins M."/>
            <person name="Connor R."/>
            <person name="Cronin A."/>
            <person name="Davis P."/>
            <person name="Feltwell T."/>
            <person name="Fraser A."/>
            <person name="Gentles S."/>
            <person name="Goble A."/>
            <person name="Hamlin N."/>
            <person name="Harris D.E."/>
            <person name="Hidalgo J."/>
            <person name="Hodgson G."/>
            <person name="Holroyd S."/>
            <person name="Hornsby T."/>
            <person name="Howarth S."/>
            <person name="Huckle E.J."/>
            <person name="Hunt S."/>
            <person name="Jagels K."/>
            <person name="James K.D."/>
            <person name="Jones L."/>
            <person name="Jones M."/>
            <person name="Leather S."/>
            <person name="McDonald S."/>
            <person name="McLean J."/>
            <person name="Mooney P."/>
            <person name="Moule S."/>
            <person name="Mungall K.L."/>
            <person name="Murphy L.D."/>
            <person name="Niblett D."/>
            <person name="Odell C."/>
            <person name="Oliver K."/>
            <person name="O'Neil S."/>
            <person name="Pearson D."/>
            <person name="Quail M.A."/>
            <person name="Rabbinowitsch E."/>
            <person name="Rutherford K.M."/>
            <person name="Rutter S."/>
            <person name="Saunders D."/>
            <person name="Seeger K."/>
            <person name="Sharp S."/>
            <person name="Skelton J."/>
            <person name="Simmonds M.N."/>
            <person name="Squares R."/>
            <person name="Squares S."/>
            <person name="Stevens K."/>
            <person name="Taylor K."/>
            <person name="Taylor R.G."/>
            <person name="Tivey A."/>
            <person name="Walsh S.V."/>
            <person name="Warren T."/>
            <person name="Whitehead S."/>
            <person name="Woodward J.R."/>
            <person name="Volckaert G."/>
            <person name="Aert R."/>
            <person name="Robben J."/>
            <person name="Grymonprez B."/>
            <person name="Weltjens I."/>
            <person name="Vanstreels E."/>
            <person name="Rieger M."/>
            <person name="Schaefer M."/>
            <person name="Mueller-Auer S."/>
            <person name="Gabel C."/>
            <person name="Fuchs M."/>
            <person name="Duesterhoeft A."/>
            <person name="Fritzc C."/>
            <person name="Holzer E."/>
            <person name="Moestl D."/>
            <person name="Hilbert H."/>
            <person name="Borzym K."/>
            <person name="Langer I."/>
            <person name="Beck A."/>
            <person name="Lehrach H."/>
            <person name="Reinhardt R."/>
            <person name="Pohl T.M."/>
            <person name="Eger P."/>
            <person name="Zimmermann W."/>
            <person name="Wedler H."/>
            <person name="Wambutt R."/>
            <person name="Purnelle B."/>
            <person name="Goffeau A."/>
            <person name="Cadieu E."/>
            <person name="Dreano S."/>
            <person name="Gloux S."/>
            <person name="Lelaure V."/>
            <person name="Mottier S."/>
            <person name="Galibert F."/>
            <person name="Aves S.J."/>
            <person name="Xiang Z."/>
            <person name="Hunt C."/>
            <person name="Moore K."/>
            <person name="Hurst S.M."/>
            <person name="Lucas M."/>
            <person name="Rochet M."/>
            <person name="Gaillardin C."/>
            <person name="Tallada V.A."/>
            <person name="Garzon A."/>
            <person name="Thode G."/>
            <person name="Daga R.R."/>
            <person name="Cruzado L."/>
            <person name="Jimenez J."/>
            <person name="Sanchez M."/>
            <person name="del Rey F."/>
            <person name="Benito J."/>
            <person name="Dominguez A."/>
            <person name="Revuelta J.L."/>
            <person name="Moreno S."/>
            <person name="Armstrong J."/>
            <person name="Forsburg S.L."/>
            <person name="Cerutti L."/>
            <person name="Lowe T."/>
            <person name="McCombie W.R."/>
            <person name="Paulsen I."/>
            <person name="Potashkin J."/>
            <person name="Shpakovski G.V."/>
            <person name="Ussery D."/>
            <person name="Barrell B.G."/>
            <person name="Nurse P."/>
        </authorList>
    </citation>
    <scope>NUCLEOTIDE SEQUENCE [LARGE SCALE GENOMIC DNA]</scope>
    <source>
        <strain>972 / ATCC 24843</strain>
    </source>
</reference>
<reference key="3">
    <citation type="journal article" date="2005" name="Curr. Biol.">
        <title>A large-scale screen in S. pombe identifies seven novel genes required for critical meiotic events.</title>
        <authorList>
            <person name="Martin-Castellanos C."/>
            <person name="Blanco M."/>
            <person name="Rozalen A.E."/>
            <person name="Perez-Hidalgo L."/>
            <person name="Garcia A.I."/>
            <person name="Conde F."/>
            <person name="Mata J."/>
            <person name="Ellermeier C."/>
            <person name="Davis L."/>
            <person name="San-Segundo P."/>
            <person name="Smith G.R."/>
            <person name="Moreno S."/>
        </authorList>
    </citation>
    <scope>FUNCTION IN MEIOSIS</scope>
</reference>
<reference key="4">
    <citation type="journal article" date="2006" name="Nat. Biotechnol.">
        <title>ORFeome cloning and global analysis of protein localization in the fission yeast Schizosaccharomyces pombe.</title>
        <authorList>
            <person name="Matsuyama A."/>
            <person name="Arai R."/>
            <person name="Yashiroda Y."/>
            <person name="Shirai A."/>
            <person name="Kamata A."/>
            <person name="Sekido S."/>
            <person name="Kobayashi Y."/>
            <person name="Hashimoto A."/>
            <person name="Hamamoto M."/>
            <person name="Hiraoka Y."/>
            <person name="Horinouchi S."/>
            <person name="Yoshida M."/>
        </authorList>
    </citation>
    <scope>SUBCELLULAR LOCATION [LARGE SCALE ANALYSIS]</scope>
</reference>
<dbReference type="EMBL" id="AB004535">
    <property type="protein sequence ID" value="BAA21397.1"/>
    <property type="status" value="ALT_SEQ"/>
    <property type="molecule type" value="Genomic_DNA"/>
</dbReference>
<dbReference type="EMBL" id="CU329671">
    <property type="protein sequence ID" value="CAC37496.1"/>
    <property type="molecule type" value="Genomic_DNA"/>
</dbReference>
<dbReference type="RefSeq" id="NP_595612.1">
    <property type="nucleotide sequence ID" value="NM_001021507.1"/>
</dbReference>
<dbReference type="SMR" id="Q96WW2"/>
<dbReference type="BioGRID" id="276757">
    <property type="interactions" value="14"/>
</dbReference>
<dbReference type="STRING" id="284812.Q96WW2"/>
<dbReference type="PaxDb" id="4896-SPBC32H8.06.1"/>
<dbReference type="EnsemblFungi" id="SPBC32H8.06.1">
    <property type="protein sequence ID" value="SPBC32H8.06.1:pep"/>
    <property type="gene ID" value="SPBC32H8.06"/>
</dbReference>
<dbReference type="GeneID" id="2540224"/>
<dbReference type="KEGG" id="spo:2540224"/>
<dbReference type="PomBase" id="SPBC32H8.06">
    <property type="gene designation" value="mug93"/>
</dbReference>
<dbReference type="VEuPathDB" id="FungiDB:SPBC32H8.06"/>
<dbReference type="HOGENOM" id="CLU_731889_0_0_1"/>
<dbReference type="InParanoid" id="Q96WW2"/>
<dbReference type="OMA" id="ANRDWEH"/>
<dbReference type="PRO" id="PR:Q96WW2"/>
<dbReference type="Proteomes" id="UP000002485">
    <property type="component" value="Chromosome II"/>
</dbReference>
<dbReference type="GO" id="GO:0032153">
    <property type="term" value="C:cell division site"/>
    <property type="evidence" value="ECO:0007005"/>
    <property type="project" value="PomBase"/>
</dbReference>
<dbReference type="GO" id="GO:0005829">
    <property type="term" value="C:cytosol"/>
    <property type="evidence" value="ECO:0007005"/>
    <property type="project" value="PomBase"/>
</dbReference>
<dbReference type="GO" id="GO:0044732">
    <property type="term" value="C:mitotic spindle pole body"/>
    <property type="evidence" value="ECO:0007005"/>
    <property type="project" value="PomBase"/>
</dbReference>
<dbReference type="GO" id="GO:0005634">
    <property type="term" value="C:nucleus"/>
    <property type="evidence" value="ECO:0007005"/>
    <property type="project" value="PomBase"/>
</dbReference>
<dbReference type="GO" id="GO:0051321">
    <property type="term" value="P:meiotic cell cycle"/>
    <property type="evidence" value="ECO:0007669"/>
    <property type="project" value="UniProtKB-KW"/>
</dbReference>
<dbReference type="GO" id="GO:0065003">
    <property type="term" value="P:protein-containing complex assembly"/>
    <property type="evidence" value="ECO:0000304"/>
    <property type="project" value="PomBase"/>
</dbReference>
<dbReference type="FunFam" id="1.25.40.10:FF:002647">
    <property type="entry name" value="Small glutamine-rich tetratricopeptide repeat-containing protein alpha-like Protein"/>
    <property type="match status" value="1"/>
</dbReference>
<dbReference type="Gene3D" id="1.25.40.10">
    <property type="entry name" value="Tetratricopeptide repeat domain"/>
    <property type="match status" value="1"/>
</dbReference>
<dbReference type="InterPro" id="IPR051966">
    <property type="entry name" value="RPAP3"/>
</dbReference>
<dbReference type="InterPro" id="IPR011990">
    <property type="entry name" value="TPR-like_helical_dom_sf"/>
</dbReference>
<dbReference type="InterPro" id="IPR019734">
    <property type="entry name" value="TPR_rpt"/>
</dbReference>
<dbReference type="PANTHER" id="PTHR46423">
    <property type="entry name" value="RNA POLYMERASE II-ASSOCIATED PROTEIN 3"/>
    <property type="match status" value="1"/>
</dbReference>
<dbReference type="PANTHER" id="PTHR46423:SF1">
    <property type="entry name" value="RNA POLYMERASE II-ASSOCIATED PROTEIN 3"/>
    <property type="match status" value="1"/>
</dbReference>
<dbReference type="SUPFAM" id="SSF48452">
    <property type="entry name" value="TPR-like"/>
    <property type="match status" value="1"/>
</dbReference>
<dbReference type="PROSITE" id="PS50005">
    <property type="entry name" value="TPR"/>
    <property type="match status" value="1"/>
</dbReference>
<dbReference type="PROSITE" id="PS50293">
    <property type="entry name" value="TPR_REGION"/>
    <property type="match status" value="1"/>
</dbReference>
<proteinExistence type="evidence at protein level"/>
<comment type="function">
    <text evidence="2">Has a role in meiosis.</text>
</comment>
<comment type="subcellular location">
    <subcellularLocation>
        <location evidence="3">Cytoplasm</location>
    </subcellularLocation>
    <subcellularLocation>
        <location evidence="3">Nucleus</location>
    </subcellularLocation>
    <text>Localizes to the barrier septum.</text>
</comment>
<comment type="sequence caution" evidence="4">
    <conflict type="erroneous gene model prediction">
        <sequence resource="EMBL-CDS" id="BAA21397"/>
    </conflict>
</comment>
<name>MUG93_SCHPO</name>
<gene>
    <name type="primary">mug93</name>
    <name type="ORF">pi018</name>
    <name type="ORF">SPBC32H8.06</name>
</gene>
<evidence type="ECO:0000255" key="1"/>
<evidence type="ECO:0000269" key="2">
    <source>
    </source>
</evidence>
<evidence type="ECO:0000269" key="3">
    <source>
    </source>
</evidence>
<evidence type="ECO:0000305" key="4"/>
<evidence type="ECO:0000312" key="5">
    <source>
        <dbReference type="EMBL" id="BAA21397.1"/>
    </source>
</evidence>